<feature type="chain" id="PRO_0000390582" description="Prokaryotic ubiquitin-like protein Pup">
    <location>
        <begin position="1"/>
        <end position="72"/>
    </location>
</feature>
<feature type="region of interest" description="Disordered" evidence="2">
    <location>
        <begin position="1"/>
        <end position="41"/>
    </location>
</feature>
<feature type="region of interest" description="ARC ATPase binding" evidence="1">
    <location>
        <begin position="28"/>
        <end position="66"/>
    </location>
</feature>
<feature type="coiled-coil region" evidence="1">
    <location>
        <begin position="27"/>
        <end position="61"/>
    </location>
</feature>
<feature type="compositionally biased region" description="Gly residues" evidence="2">
    <location>
        <begin position="1"/>
        <end position="10"/>
    </location>
</feature>
<feature type="compositionally biased region" description="Basic and acidic residues" evidence="2">
    <location>
        <begin position="32"/>
        <end position="41"/>
    </location>
</feature>
<feature type="modified residue" description="Deamidated glutamine" evidence="1">
    <location>
        <position position="72"/>
    </location>
</feature>
<feature type="cross-link" description="Isoglutamyl lysine isopeptide (Gln-Lys) (interchain with K-? in acceptor proteins)" evidence="1">
    <location>
        <position position="72"/>
    </location>
</feature>
<accession>Q2J9Q2</accession>
<evidence type="ECO:0000255" key="1">
    <source>
        <dbReference type="HAMAP-Rule" id="MF_02106"/>
    </source>
</evidence>
<evidence type="ECO:0000256" key="2">
    <source>
        <dbReference type="SAM" id="MobiDB-lite"/>
    </source>
</evidence>
<proteinExistence type="inferred from homology"/>
<organism>
    <name type="scientific">Frankia casuarinae (strain DSM 45818 / CECT 9043 / HFP020203 / CcI3)</name>
    <dbReference type="NCBI Taxonomy" id="106370"/>
    <lineage>
        <taxon>Bacteria</taxon>
        <taxon>Bacillati</taxon>
        <taxon>Actinomycetota</taxon>
        <taxon>Actinomycetes</taxon>
        <taxon>Frankiales</taxon>
        <taxon>Frankiaceae</taxon>
        <taxon>Frankia</taxon>
    </lineage>
</organism>
<keyword id="KW-0175">Coiled coil</keyword>
<keyword id="KW-1017">Isopeptide bond</keyword>
<keyword id="KW-1185">Reference proteome</keyword>
<keyword id="KW-0833">Ubl conjugation pathway</keyword>
<reference key="1">
    <citation type="journal article" date="2007" name="Genome Res.">
        <title>Genome characteristics of facultatively symbiotic Frankia sp. strains reflect host range and host plant biogeography.</title>
        <authorList>
            <person name="Normand P."/>
            <person name="Lapierre P."/>
            <person name="Tisa L.S."/>
            <person name="Gogarten J.P."/>
            <person name="Alloisio N."/>
            <person name="Bagnarol E."/>
            <person name="Bassi C.A."/>
            <person name="Berry A.M."/>
            <person name="Bickhart D.M."/>
            <person name="Choisne N."/>
            <person name="Couloux A."/>
            <person name="Cournoyer B."/>
            <person name="Cruveiller S."/>
            <person name="Daubin V."/>
            <person name="Demange N."/>
            <person name="Francino M.P."/>
            <person name="Goltsman E."/>
            <person name="Huang Y."/>
            <person name="Kopp O.R."/>
            <person name="Labarre L."/>
            <person name="Lapidus A."/>
            <person name="Lavire C."/>
            <person name="Marechal J."/>
            <person name="Martinez M."/>
            <person name="Mastronunzio J.E."/>
            <person name="Mullin B.C."/>
            <person name="Niemann J."/>
            <person name="Pujic P."/>
            <person name="Rawnsley T."/>
            <person name="Rouy Z."/>
            <person name="Schenowitz C."/>
            <person name="Sellstedt A."/>
            <person name="Tavares F."/>
            <person name="Tomkins J.P."/>
            <person name="Vallenet D."/>
            <person name="Valverde C."/>
            <person name="Wall L.G."/>
            <person name="Wang Y."/>
            <person name="Medigue C."/>
            <person name="Benson D.R."/>
        </authorList>
    </citation>
    <scope>NUCLEOTIDE SEQUENCE [LARGE SCALE GENOMIC DNA]</scope>
    <source>
        <strain>DSM 45818 / CECT 9043 / HFP020203 / CcI3</strain>
    </source>
</reference>
<gene>
    <name evidence="1" type="primary">pup</name>
    <name type="ordered locus">Francci3_2628</name>
</gene>
<name>PUP_FRACC</name>
<sequence length="72" mass="7998">MATRDSGGGQQRADRRAEEIDDVATEDTSASDLKERHEKLSEDVDSLLDEIDDVLEENAEEFVKGYVQKGGQ</sequence>
<protein>
    <recommendedName>
        <fullName evidence="1">Prokaryotic ubiquitin-like protein Pup</fullName>
    </recommendedName>
    <alternativeName>
        <fullName evidence="1">Bacterial ubiquitin-like modifier</fullName>
    </alternativeName>
</protein>
<dbReference type="EMBL" id="CP000249">
    <property type="protein sequence ID" value="ABD11990.1"/>
    <property type="molecule type" value="Genomic_DNA"/>
</dbReference>
<dbReference type="RefSeq" id="WP_011437025.1">
    <property type="nucleotide sequence ID" value="NZ_LRTJ01000046.1"/>
</dbReference>
<dbReference type="SMR" id="Q2J9Q2"/>
<dbReference type="STRING" id="106370.Francci3_2628"/>
<dbReference type="KEGG" id="fra:Francci3_2628"/>
<dbReference type="eggNOG" id="ENOG50333JS">
    <property type="taxonomic scope" value="Bacteria"/>
</dbReference>
<dbReference type="HOGENOM" id="CLU_183816_2_0_11"/>
<dbReference type="OrthoDB" id="3254977at2"/>
<dbReference type="PhylomeDB" id="Q2J9Q2"/>
<dbReference type="UniPathway" id="UPA00997"/>
<dbReference type="Proteomes" id="UP000001937">
    <property type="component" value="Chromosome"/>
</dbReference>
<dbReference type="GO" id="GO:0070628">
    <property type="term" value="F:proteasome binding"/>
    <property type="evidence" value="ECO:0007669"/>
    <property type="project" value="UniProtKB-UniRule"/>
</dbReference>
<dbReference type="GO" id="GO:0031386">
    <property type="term" value="F:protein tag activity"/>
    <property type="evidence" value="ECO:0007669"/>
    <property type="project" value="UniProtKB-UniRule"/>
</dbReference>
<dbReference type="GO" id="GO:0019941">
    <property type="term" value="P:modification-dependent protein catabolic process"/>
    <property type="evidence" value="ECO:0007669"/>
    <property type="project" value="UniProtKB-UniRule"/>
</dbReference>
<dbReference type="GO" id="GO:0010498">
    <property type="term" value="P:proteasomal protein catabolic process"/>
    <property type="evidence" value="ECO:0007669"/>
    <property type="project" value="UniProtKB-UniRule"/>
</dbReference>
<dbReference type="GO" id="GO:0070490">
    <property type="term" value="P:protein pupylation"/>
    <property type="evidence" value="ECO:0007669"/>
    <property type="project" value="UniProtKB-UniRule"/>
</dbReference>
<dbReference type="HAMAP" id="MF_02106">
    <property type="entry name" value="Pup"/>
    <property type="match status" value="1"/>
</dbReference>
<dbReference type="InterPro" id="IPR008515">
    <property type="entry name" value="Ubiquitin-like_Pup"/>
</dbReference>
<dbReference type="NCBIfam" id="TIGR03687">
    <property type="entry name" value="pupylate_cterm"/>
    <property type="match status" value="1"/>
</dbReference>
<dbReference type="Pfam" id="PF05639">
    <property type="entry name" value="Pup"/>
    <property type="match status" value="1"/>
</dbReference>
<comment type="function">
    <text evidence="1">Protein modifier that is covalently attached to lysine residues of substrate proteins, thereby targeting them for proteasomal degradation. The tagging system is termed pupylation.</text>
</comment>
<comment type="pathway">
    <text evidence="1">Protein degradation; proteasomal Pup-dependent pathway.</text>
</comment>
<comment type="subunit">
    <text evidence="1">Strongly interacts with the proteasome-associated ATPase ARC through a hydrophobic interface; the interacting region of Pup lies in its C-terminal half. There is one Pup binding site per ARC hexamer ring.</text>
</comment>
<comment type="domain">
    <text evidence="1">The N-terminal unstructured half of Pup provides a signal required to initiate unfolding and degradation by the proteasome but is not needed for pupylation, while the C-terminal helical half of Pup interacts with ARC to target proteins to the proteasome.</text>
</comment>
<comment type="PTM">
    <text evidence="1">Is modified by deamidation of its C-terminal glutamine to glutamate by the deamidase Dop, a prerequisite to the subsequent pupylation process.</text>
</comment>
<comment type="similarity">
    <text evidence="1">Belongs to the prokaryotic ubiquitin-like protein family.</text>
</comment>